<proteinExistence type="evidence at protein level"/>
<reference key="1">
    <citation type="journal article" date="1989" name="Nucleic Acids Res.">
        <title>Nucleotide sequence of a cDNA from the putative ovarian tumor locus of Drosophila melanogaster.</title>
        <authorList>
            <person name="Champe M.A."/>
            <person name="Laird C.D."/>
        </authorList>
    </citation>
    <scope>NUCLEOTIDE SEQUENCE [MRNA] (ISOFORM A)</scope>
    <source>
        <strain>Canton-S</strain>
        <tissue>Ovary</tissue>
    </source>
</reference>
<reference key="2">
    <citation type="journal article" date="1989" name="Mol. Cell. Biol.">
        <title>Sequence and structure of the Drosophila melanogaster ovarian tumor gene and generation of an antibody specific for the ovarian tumor protein.</title>
        <authorList>
            <person name="Steinhauer W.R."/>
            <person name="Walsh R.C."/>
            <person name="Kalfayan L.J."/>
        </authorList>
    </citation>
    <scope>NUCLEOTIDE SEQUENCE [GENOMIC DNA]</scope>
    <source>
        <strain>Canton-S</strain>
    </source>
</reference>
<reference key="3">
    <citation type="journal article" date="1992" name="Genes Dev.">
        <title>A specific ovarian tumor protein isoform is required for efficient differentiation of germ cells in Drosophila oogenesis.</title>
        <authorList>
            <person name="Steinhauer W.R."/>
            <person name="Kalfayan L.J."/>
        </authorList>
    </citation>
    <scope>NUCLEOTIDE SEQUENCE [GENOMIC DNA] (ISOFORMS A AND B)</scope>
    <scope>FUNCTION</scope>
    <scope>SUBCELLULAR LOCATION</scope>
    <scope>ALTERNATIVE SPLICING</scope>
    <scope>DEVELOPMENTAL STAGE</scope>
    <source>
        <strain>Canton-S</strain>
    </source>
</reference>
<reference key="4">
    <citation type="journal article" date="2000" name="Science">
        <title>The genome sequence of Drosophila melanogaster.</title>
        <authorList>
            <person name="Adams M.D."/>
            <person name="Celniker S.E."/>
            <person name="Holt R.A."/>
            <person name="Evans C.A."/>
            <person name="Gocayne J.D."/>
            <person name="Amanatides P.G."/>
            <person name="Scherer S.E."/>
            <person name="Li P.W."/>
            <person name="Hoskins R.A."/>
            <person name="Galle R.F."/>
            <person name="George R.A."/>
            <person name="Lewis S.E."/>
            <person name="Richards S."/>
            <person name="Ashburner M."/>
            <person name="Henderson S.N."/>
            <person name="Sutton G.G."/>
            <person name="Wortman J.R."/>
            <person name="Yandell M.D."/>
            <person name="Zhang Q."/>
            <person name="Chen L.X."/>
            <person name="Brandon R.C."/>
            <person name="Rogers Y.-H.C."/>
            <person name="Blazej R.G."/>
            <person name="Champe M."/>
            <person name="Pfeiffer B.D."/>
            <person name="Wan K.H."/>
            <person name="Doyle C."/>
            <person name="Baxter E.G."/>
            <person name="Helt G."/>
            <person name="Nelson C.R."/>
            <person name="Miklos G.L.G."/>
            <person name="Abril J.F."/>
            <person name="Agbayani A."/>
            <person name="An H.-J."/>
            <person name="Andrews-Pfannkoch C."/>
            <person name="Baldwin D."/>
            <person name="Ballew R.M."/>
            <person name="Basu A."/>
            <person name="Baxendale J."/>
            <person name="Bayraktaroglu L."/>
            <person name="Beasley E.M."/>
            <person name="Beeson K.Y."/>
            <person name="Benos P.V."/>
            <person name="Berman B.P."/>
            <person name="Bhandari D."/>
            <person name="Bolshakov S."/>
            <person name="Borkova D."/>
            <person name="Botchan M.R."/>
            <person name="Bouck J."/>
            <person name="Brokstein P."/>
            <person name="Brottier P."/>
            <person name="Burtis K.C."/>
            <person name="Busam D.A."/>
            <person name="Butler H."/>
            <person name="Cadieu E."/>
            <person name="Center A."/>
            <person name="Chandra I."/>
            <person name="Cherry J.M."/>
            <person name="Cawley S."/>
            <person name="Dahlke C."/>
            <person name="Davenport L.B."/>
            <person name="Davies P."/>
            <person name="de Pablos B."/>
            <person name="Delcher A."/>
            <person name="Deng Z."/>
            <person name="Mays A.D."/>
            <person name="Dew I."/>
            <person name="Dietz S.M."/>
            <person name="Dodson K."/>
            <person name="Doup L.E."/>
            <person name="Downes M."/>
            <person name="Dugan-Rocha S."/>
            <person name="Dunkov B.C."/>
            <person name="Dunn P."/>
            <person name="Durbin K.J."/>
            <person name="Evangelista C.C."/>
            <person name="Ferraz C."/>
            <person name="Ferriera S."/>
            <person name="Fleischmann W."/>
            <person name="Fosler C."/>
            <person name="Gabrielian A.E."/>
            <person name="Garg N.S."/>
            <person name="Gelbart W.M."/>
            <person name="Glasser K."/>
            <person name="Glodek A."/>
            <person name="Gong F."/>
            <person name="Gorrell J.H."/>
            <person name="Gu Z."/>
            <person name="Guan P."/>
            <person name="Harris M."/>
            <person name="Harris N.L."/>
            <person name="Harvey D.A."/>
            <person name="Heiman T.J."/>
            <person name="Hernandez J.R."/>
            <person name="Houck J."/>
            <person name="Hostin D."/>
            <person name="Houston K.A."/>
            <person name="Howland T.J."/>
            <person name="Wei M.-H."/>
            <person name="Ibegwam C."/>
            <person name="Jalali M."/>
            <person name="Kalush F."/>
            <person name="Karpen G.H."/>
            <person name="Ke Z."/>
            <person name="Kennison J.A."/>
            <person name="Ketchum K.A."/>
            <person name="Kimmel B.E."/>
            <person name="Kodira C.D."/>
            <person name="Kraft C.L."/>
            <person name="Kravitz S."/>
            <person name="Kulp D."/>
            <person name="Lai Z."/>
            <person name="Lasko P."/>
            <person name="Lei Y."/>
            <person name="Levitsky A.A."/>
            <person name="Li J.H."/>
            <person name="Li Z."/>
            <person name="Liang Y."/>
            <person name="Lin X."/>
            <person name="Liu X."/>
            <person name="Mattei B."/>
            <person name="McIntosh T.C."/>
            <person name="McLeod M.P."/>
            <person name="McPherson D."/>
            <person name="Merkulov G."/>
            <person name="Milshina N.V."/>
            <person name="Mobarry C."/>
            <person name="Morris J."/>
            <person name="Moshrefi A."/>
            <person name="Mount S.M."/>
            <person name="Moy M."/>
            <person name="Murphy B."/>
            <person name="Murphy L."/>
            <person name="Muzny D.M."/>
            <person name="Nelson D.L."/>
            <person name="Nelson D.R."/>
            <person name="Nelson K.A."/>
            <person name="Nixon K."/>
            <person name="Nusskern D.R."/>
            <person name="Pacleb J.M."/>
            <person name="Palazzolo M."/>
            <person name="Pittman G.S."/>
            <person name="Pan S."/>
            <person name="Pollard J."/>
            <person name="Puri V."/>
            <person name="Reese M.G."/>
            <person name="Reinert K."/>
            <person name="Remington K."/>
            <person name="Saunders R.D.C."/>
            <person name="Scheeler F."/>
            <person name="Shen H."/>
            <person name="Shue B.C."/>
            <person name="Siden-Kiamos I."/>
            <person name="Simpson M."/>
            <person name="Skupski M.P."/>
            <person name="Smith T.J."/>
            <person name="Spier E."/>
            <person name="Spradling A.C."/>
            <person name="Stapleton M."/>
            <person name="Strong R."/>
            <person name="Sun E."/>
            <person name="Svirskas R."/>
            <person name="Tector C."/>
            <person name="Turner R."/>
            <person name="Venter E."/>
            <person name="Wang A.H."/>
            <person name="Wang X."/>
            <person name="Wang Z.-Y."/>
            <person name="Wassarman D.A."/>
            <person name="Weinstock G.M."/>
            <person name="Weissenbach J."/>
            <person name="Williams S.M."/>
            <person name="Woodage T."/>
            <person name="Worley K.C."/>
            <person name="Wu D."/>
            <person name="Yang S."/>
            <person name="Yao Q.A."/>
            <person name="Ye J."/>
            <person name="Yeh R.-F."/>
            <person name="Zaveri J.S."/>
            <person name="Zhan M."/>
            <person name="Zhang G."/>
            <person name="Zhao Q."/>
            <person name="Zheng L."/>
            <person name="Zheng X.H."/>
            <person name="Zhong F.N."/>
            <person name="Zhong W."/>
            <person name="Zhou X."/>
            <person name="Zhu S.C."/>
            <person name="Zhu X."/>
            <person name="Smith H.O."/>
            <person name="Gibbs R.A."/>
            <person name="Myers E.W."/>
            <person name="Rubin G.M."/>
            <person name="Venter J.C."/>
        </authorList>
    </citation>
    <scope>NUCLEOTIDE SEQUENCE [LARGE SCALE GENOMIC DNA]</scope>
    <source>
        <strain>Berkeley</strain>
    </source>
</reference>
<reference key="5">
    <citation type="journal article" date="2002" name="Genome Biol.">
        <title>Annotation of the Drosophila melanogaster euchromatic genome: a systematic review.</title>
        <authorList>
            <person name="Misra S."/>
            <person name="Crosby M.A."/>
            <person name="Mungall C.J."/>
            <person name="Matthews B.B."/>
            <person name="Campbell K.S."/>
            <person name="Hradecky P."/>
            <person name="Huang Y."/>
            <person name="Kaminker J.S."/>
            <person name="Millburn G.H."/>
            <person name="Prochnik S.E."/>
            <person name="Smith C.D."/>
            <person name="Tupy J.L."/>
            <person name="Whitfield E.J."/>
            <person name="Bayraktaroglu L."/>
            <person name="Berman B.P."/>
            <person name="Bettencourt B.R."/>
            <person name="Celniker S.E."/>
            <person name="de Grey A.D.N.J."/>
            <person name="Drysdale R.A."/>
            <person name="Harris N.L."/>
            <person name="Richter J."/>
            <person name="Russo S."/>
            <person name="Schroeder A.J."/>
            <person name="Shu S.Q."/>
            <person name="Stapleton M."/>
            <person name="Yamada C."/>
            <person name="Ashburner M."/>
            <person name="Gelbart W.M."/>
            <person name="Rubin G.M."/>
            <person name="Lewis S.E."/>
        </authorList>
    </citation>
    <scope>GENOME REANNOTATION</scope>
    <scope>ALTERNATIVE SPLICING</scope>
    <source>
        <strain>Berkeley</strain>
    </source>
</reference>
<reference key="6">
    <citation type="journal article" date="2002" name="Genome Biol.">
        <title>A Drosophila full-length cDNA resource.</title>
        <authorList>
            <person name="Stapleton M."/>
            <person name="Carlson J.W."/>
            <person name="Brokstein P."/>
            <person name="Yu C."/>
            <person name="Champe M."/>
            <person name="George R.A."/>
            <person name="Guarin H."/>
            <person name="Kronmiller B."/>
            <person name="Pacleb J.M."/>
            <person name="Park S."/>
            <person name="Wan K.H."/>
            <person name="Rubin G.M."/>
            <person name="Celniker S.E."/>
        </authorList>
    </citation>
    <scope>NUCLEOTIDE SEQUENCE [LARGE SCALE MRNA] (ISOFORM A)</scope>
    <source>
        <strain>Berkeley</strain>
        <tissue>Embryo</tissue>
    </source>
</reference>
<reference key="7">
    <citation type="journal article" date="1993" name="Genetics">
        <title>Structure and expression of hybrid dysgenesis-induced alleles of the ovarian tumor (otu) gene in Drosophila melanogaster.</title>
        <authorList>
            <person name="Sass G.L."/>
            <person name="Mohler J.D."/>
            <person name="Walsh R.C."/>
            <person name="Kalfayan L.J."/>
            <person name="Searles L.L."/>
        </authorList>
    </citation>
    <scope>FUNCTION</scope>
    <scope>ALTERNATIVE SPLICING</scope>
    <scope>DISRUPTION PHENOTYPE</scope>
</reference>
<reference key="8">
    <citation type="journal article" date="1995" name="Dev. Biol.">
        <title>The ovarian tumor protein isoforms of Drosophila melanogaster exhibit differences in function, expression, and localization.</title>
        <authorList>
            <person name="Sass G.L."/>
            <person name="Comer A.R."/>
            <person name="Searles L.L."/>
        </authorList>
    </citation>
    <scope>FUNCTION</scope>
    <scope>SUBCELLULAR LOCATION</scope>
    <scope>DEVELOPMENTAL STAGE</scope>
    <scope>MUTAGENESIS OF CYS-343</scope>
</reference>
<reference key="9">
    <citation type="journal article" date="1997" name="Dev. Biol.">
        <title>The Drosophila ovarian tumor gene is required for the organization of actin filaments during multiple stages in oogenesis.</title>
        <authorList>
            <person name="Rodesch C."/>
            <person name="Pettus J."/>
            <person name="Nagoshi R.N."/>
        </authorList>
    </citation>
    <scope>FUNCTION</scope>
    <scope>DISRUPTION PHENOTYPE</scope>
</reference>
<reference key="10">
    <citation type="journal article" date="1999" name="Development">
        <title>The Drosophila gene stand still encodes a germline chromatin-associated protein that controls the transcription of the ovarian tumor gene.</title>
        <authorList>
            <person name="Sahut-Barnola I."/>
            <person name="Pauli D."/>
        </authorList>
    </citation>
    <scope>INDUCTION BY STIL</scope>
</reference>
<reference key="11">
    <citation type="journal article" date="2001" name="Mech. Dev.">
        <title>Distinct domains mediate the early and late functions of the Drosophila ovarian tumor proteins.</title>
        <authorList>
            <person name="Glenn L.E."/>
            <person name="Searles L.L."/>
        </authorList>
    </citation>
    <scope>SUBCELLULAR LOCATION</scope>
    <scope>INTERACTION WITH MRNP COMPLEXES</scope>
    <scope>DEVELOPMENTAL STAGE</scope>
    <scope>DOMAIN LC</scope>
    <scope>MUTAGENESIS OF 250-GLY--HIS-853; 338-LYS--HIS-853; 380-VAL--HIS-853; 423-SER--HIS-853 AND 627-THR--HIS-853</scope>
</reference>
<reference key="12">
    <citation type="journal article" date="2004" name="Development">
        <title>Hrb27C, Sqd and Otu cooperatively regulate gurken RNA localization and mediate nurse cell chromosome dispersion in Drosophila oogenesis.</title>
        <authorList>
            <person name="Goodrich J.S."/>
            <person name="Clouse K.N."/>
            <person name="Schuepbach T."/>
        </authorList>
    </citation>
    <scope>FUNCTION</scope>
    <scope>INTERACTION WITH HRB27C</scope>
</reference>
<reference key="13">
    <citation type="journal article" date="2015" name="PLoS ONE">
        <title>Evolutionary Loss of Activity in De-Ubiquitylating Enzymes of the OTU Family.</title>
        <authorList>
            <person name="Louis M."/>
            <person name="Hofmann K."/>
            <person name="Broemer M."/>
        </authorList>
    </citation>
    <scope>FUNCTION</scope>
    <scope>MUTAGENESIS OF SER-40</scope>
</reference>
<reference key="14">
    <citation type="journal article" date="2017" name="Proc. Natl. Acad. Sci. U.S.A.">
        <title>Bam-dependent deubiquitinase complex can disrupt germ-line stem cell maintenance by targeting cyclin A.</title>
        <authorList>
            <person name="Ji S."/>
            <person name="Li C."/>
            <person name="Hu L."/>
            <person name="Liu K."/>
            <person name="Mei J."/>
            <person name="Luo Y."/>
            <person name="Tao Y."/>
            <person name="Xia Z."/>
            <person name="Sun Q."/>
            <person name="Chen D."/>
        </authorList>
    </citation>
    <scope>FUNCTION</scope>
    <scope>CATALYTIC ACTIVITY</scope>
    <scope>INTERACTION WITH BAM AND CYCA</scope>
    <scope>DISRUPTION PHENOTYPE</scope>
</reference>
<reference key="15">
    <citation type="journal article" date="2019" name="Mol. Cell">
        <title>LC Domain-Mediated Coalescence Is Essential for Otu Enzymatic Activity to Extend Drosophila Lifespan.</title>
        <authorList>
            <person name="Ji S."/>
            <person name="Luo Y."/>
            <person name="Cai Q."/>
            <person name="Cao Z."/>
            <person name="Zhao Y."/>
            <person name="Mei J."/>
            <person name="Li C."/>
            <person name="Xia P."/>
            <person name="Xie Z."/>
            <person name="Xia Z."/>
            <person name="Zhang J."/>
            <person name="Sun Q."/>
            <person name="Chen D."/>
        </authorList>
    </citation>
    <scope>FUNCTION</scope>
    <scope>CATALYTIC ACTIVITY</scope>
    <scope>ACTIVITY REGULATION</scope>
    <scope>SUBUNIT</scope>
    <scope>INTERACTION WITH BAM AND TRAF6</scope>
    <scope>SUBCELLULAR LOCATION</scope>
    <scope>TISSUE SPECIFICITY</scope>
    <scope>DEVELOPMENTAL STAGE</scope>
    <scope>DOMAIN LC</scope>
    <scope>DISRUPTION PHENOTYPE</scope>
    <scope>ACTIVE SITE</scope>
    <scope>MUTAGENESIS OF ASP-37; SER-40; HIS-143; CYS-442; CYS-453 AND CYS-570</scope>
</reference>
<reference key="16">
    <citation type="journal article" date="2023" name="Sci. Adv.">
        <title>The histone demethylase Kdm3 prevents auto-immune piRNAs production in Drosophila.</title>
        <authorList>
            <person name="Casier K."/>
            <person name="Autaa J."/>
            <person name="Gueguen N."/>
            <person name="Delmarre V."/>
            <person name="Marie P.P."/>
            <person name="Ronsseray S."/>
            <person name="Carre C."/>
            <person name="Brasset E."/>
            <person name="Teysset L."/>
            <person name="Boivin A."/>
        </authorList>
    </citation>
    <scope>DISRUPTION PHENOTYPE</scope>
</reference>
<protein>
    <recommendedName>
        <fullName evidence="19">Deubiquitinase otu</fullName>
        <ecNumber evidence="9 10">3.4.19.-</ecNumber>
    </recommendedName>
    <alternativeName>
        <fullName evidence="22">Protein ovarian tumor</fullName>
    </alternativeName>
</protein>
<keyword id="KW-0025">Alternative splicing</keyword>
<keyword id="KW-0034">Amyloid</keyword>
<keyword id="KW-0963">Cytoplasm</keyword>
<keyword id="KW-0378">Hydrolase</keyword>
<keyword id="KW-1185">Reference proteome</keyword>
<keyword id="KW-0833">Ubl conjugation pathway</keyword>
<name>OTU_DROME</name>
<dbReference type="EC" id="3.4.19.-" evidence="9 10"/>
<dbReference type="EMBL" id="X13693">
    <property type="protein sequence ID" value="CAA31983.1"/>
    <property type="molecule type" value="mRNA"/>
</dbReference>
<dbReference type="EMBL" id="M30825">
    <property type="protein sequence ID" value="AAA28740.1"/>
    <property type="molecule type" value="Genomic_DNA"/>
</dbReference>
<dbReference type="EMBL" id="M30825">
    <property type="protein sequence ID" value="AAF97987.1"/>
    <property type="molecule type" value="Genomic_DNA"/>
</dbReference>
<dbReference type="EMBL" id="AE014298">
    <property type="protein sequence ID" value="AAF46384.1"/>
    <property type="molecule type" value="Genomic_DNA"/>
</dbReference>
<dbReference type="EMBL" id="AE014298">
    <property type="protein sequence ID" value="AAN09234.1"/>
    <property type="molecule type" value="Genomic_DNA"/>
</dbReference>
<dbReference type="EMBL" id="AE014298">
    <property type="protein sequence ID" value="AAS65286.1"/>
    <property type="molecule type" value="Genomic_DNA"/>
</dbReference>
<dbReference type="EMBL" id="AY071588">
    <property type="protein sequence ID" value="AAL49210.1"/>
    <property type="status" value="ALT_FRAME"/>
    <property type="molecule type" value="mRNA"/>
</dbReference>
<dbReference type="PIR" id="B41760">
    <property type="entry name" value="B41760"/>
</dbReference>
<dbReference type="PIR" id="S04085">
    <property type="entry name" value="S04085"/>
</dbReference>
<dbReference type="RefSeq" id="NP_001259332.1">
    <molecule id="P10383-2"/>
    <property type="nucleotide sequence ID" value="NM_001272403.1"/>
</dbReference>
<dbReference type="RefSeq" id="NP_001259333.1">
    <molecule id="P10383-2"/>
    <property type="nucleotide sequence ID" value="NM_001272404.1"/>
</dbReference>
<dbReference type="RefSeq" id="NP_511089.2">
    <molecule id="P10383-1"/>
    <property type="nucleotide sequence ID" value="NM_078534.4"/>
</dbReference>
<dbReference type="RefSeq" id="NP_727271.1">
    <molecule id="P10383-2"/>
    <property type="nucleotide sequence ID" value="NM_167158.3"/>
</dbReference>
<dbReference type="RefSeq" id="NP_996379.1">
    <molecule id="P10383-1"/>
    <property type="nucleotide sequence ID" value="NM_206656.2"/>
</dbReference>
<dbReference type="SMR" id="P10383"/>
<dbReference type="BioGRID" id="58248">
    <property type="interactions" value="23"/>
</dbReference>
<dbReference type="DIP" id="DIP-19612N"/>
<dbReference type="FunCoup" id="P10383">
    <property type="interactions" value="244"/>
</dbReference>
<dbReference type="IntAct" id="P10383">
    <property type="interactions" value="1"/>
</dbReference>
<dbReference type="STRING" id="7227.FBpp0089325"/>
<dbReference type="GlyGen" id="P10383">
    <property type="glycosylation" value="2 sites"/>
</dbReference>
<dbReference type="PaxDb" id="7227-FBpp0071181"/>
<dbReference type="EnsemblMetazoa" id="FBtr0071236">
    <molecule id="P10383-2"/>
    <property type="protein sequence ID" value="FBpp0071180"/>
    <property type="gene ID" value="FBgn0003023"/>
</dbReference>
<dbReference type="EnsemblMetazoa" id="FBtr0071237">
    <molecule id="P10383-1"/>
    <property type="protein sequence ID" value="FBpp0071181"/>
    <property type="gene ID" value="FBgn0003023"/>
</dbReference>
<dbReference type="EnsemblMetazoa" id="FBtr0071238">
    <molecule id="P10383-1"/>
    <property type="protein sequence ID" value="FBpp0089325"/>
    <property type="gene ID" value="FBgn0003023"/>
</dbReference>
<dbReference type="EnsemblMetazoa" id="FBtr0333146">
    <molecule id="P10383-2"/>
    <property type="protein sequence ID" value="FBpp0305351"/>
    <property type="gene ID" value="FBgn0003023"/>
</dbReference>
<dbReference type="EnsemblMetazoa" id="FBtr0333147">
    <molecule id="P10383-2"/>
    <property type="protein sequence ID" value="FBpp0305352"/>
    <property type="gene ID" value="FBgn0003023"/>
</dbReference>
<dbReference type="GeneID" id="31789"/>
<dbReference type="KEGG" id="dme:Dmel_CG12743"/>
<dbReference type="AGR" id="FB:FBgn0003023"/>
<dbReference type="CTD" id="31789"/>
<dbReference type="FlyBase" id="FBgn0003023">
    <property type="gene designation" value="otu"/>
</dbReference>
<dbReference type="VEuPathDB" id="VectorBase:FBgn0003023"/>
<dbReference type="eggNOG" id="KOG2605">
    <property type="taxonomic scope" value="Eukaryota"/>
</dbReference>
<dbReference type="GeneTree" id="ENSGT00940000174398"/>
<dbReference type="InParanoid" id="P10383"/>
<dbReference type="OMA" id="QLYTCHI"/>
<dbReference type="OrthoDB" id="10017659at2759"/>
<dbReference type="PhylomeDB" id="P10383"/>
<dbReference type="SignaLink" id="P10383"/>
<dbReference type="BioGRID-ORCS" id="31789">
    <property type="hits" value="0 hits in 3 CRISPR screens"/>
</dbReference>
<dbReference type="GenomeRNAi" id="31789"/>
<dbReference type="PRO" id="PR:P10383"/>
<dbReference type="Proteomes" id="UP000000803">
    <property type="component" value="Chromosome X"/>
</dbReference>
<dbReference type="Bgee" id="FBgn0003023">
    <property type="expression patterns" value="Expressed in cleaving embryo and 25 other cell types or tissues"/>
</dbReference>
<dbReference type="ExpressionAtlas" id="P10383">
    <property type="expression patterns" value="baseline and differential"/>
</dbReference>
<dbReference type="GO" id="GO:0005938">
    <property type="term" value="C:cell cortex"/>
    <property type="evidence" value="ECO:0007669"/>
    <property type="project" value="UniProtKB-SubCell"/>
</dbReference>
<dbReference type="GO" id="GO:0036464">
    <property type="term" value="C:cytoplasmic ribonucleoprotein granule"/>
    <property type="evidence" value="ECO:0000314"/>
    <property type="project" value="UniProtKB"/>
</dbReference>
<dbReference type="GO" id="GO:0005829">
    <property type="term" value="C:cytosol"/>
    <property type="evidence" value="ECO:0000314"/>
    <property type="project" value="UniProtKB"/>
</dbReference>
<dbReference type="GO" id="GO:0048471">
    <property type="term" value="C:perinuclear region of cytoplasm"/>
    <property type="evidence" value="ECO:0007669"/>
    <property type="project" value="UniProtKB-SubCell"/>
</dbReference>
<dbReference type="GO" id="GO:0101005">
    <property type="term" value="F:deubiquitinase activity"/>
    <property type="evidence" value="ECO:0000314"/>
    <property type="project" value="FlyBase"/>
</dbReference>
<dbReference type="GO" id="GO:0061578">
    <property type="term" value="F:K63-linked deubiquitinase activity"/>
    <property type="evidence" value="ECO:0000318"/>
    <property type="project" value="GO_Central"/>
</dbReference>
<dbReference type="GO" id="GO:0003729">
    <property type="term" value="F:mRNA binding"/>
    <property type="evidence" value="ECO:0000314"/>
    <property type="project" value="FlyBase"/>
</dbReference>
<dbReference type="GO" id="GO:0008236">
    <property type="term" value="F:serine-type peptidase activity"/>
    <property type="evidence" value="ECO:0000314"/>
    <property type="project" value="FlyBase"/>
</dbReference>
<dbReference type="GO" id="GO:0030036">
    <property type="term" value="P:actin cytoskeleton organization"/>
    <property type="evidence" value="ECO:0000315"/>
    <property type="project" value="UniProtKB"/>
</dbReference>
<dbReference type="GO" id="GO:0019099">
    <property type="term" value="P:female germ-line sex determination"/>
    <property type="evidence" value="ECO:0000303"/>
    <property type="project" value="FlyBase"/>
</dbReference>
<dbReference type="GO" id="GO:0048142">
    <property type="term" value="P:germarium-derived cystoblast division"/>
    <property type="evidence" value="ECO:0000315"/>
    <property type="project" value="UniProtKB"/>
</dbReference>
<dbReference type="GO" id="GO:0030727">
    <property type="term" value="P:germarium-derived female germ-line cyst formation"/>
    <property type="evidence" value="ECO:0000315"/>
    <property type="project" value="UniProtKB"/>
</dbReference>
<dbReference type="GO" id="GO:0030706">
    <property type="term" value="P:germarium-derived oocyte differentiation"/>
    <property type="evidence" value="ECO:0000315"/>
    <property type="project" value="UniProtKB"/>
</dbReference>
<dbReference type="GO" id="GO:0061060">
    <property type="term" value="P:negative regulation of peptidoglycan recognition protein signaling pathway"/>
    <property type="evidence" value="ECO:0000315"/>
    <property type="project" value="FlyBase"/>
</dbReference>
<dbReference type="GO" id="GO:0030723">
    <property type="term" value="P:ovarian fusome organization"/>
    <property type="evidence" value="ECO:0000315"/>
    <property type="project" value="UniProtKB"/>
</dbReference>
<dbReference type="GO" id="GO:0032877">
    <property type="term" value="P:positive regulation of DNA endoreduplication"/>
    <property type="evidence" value="ECO:0000315"/>
    <property type="project" value="FlyBase"/>
</dbReference>
<dbReference type="GO" id="GO:2000738">
    <property type="term" value="P:positive regulation of stem cell differentiation"/>
    <property type="evidence" value="ECO:0000315"/>
    <property type="project" value="FlyBase"/>
</dbReference>
<dbReference type="GO" id="GO:0009966">
    <property type="term" value="P:regulation of signal transduction"/>
    <property type="evidence" value="ECO:0000318"/>
    <property type="project" value="GO_Central"/>
</dbReference>
<dbReference type="CDD" id="cd22753">
    <property type="entry name" value="OTU_ALG13-like"/>
    <property type="match status" value="1"/>
</dbReference>
<dbReference type="CDD" id="cd20380">
    <property type="entry name" value="Tudor_TDRD13-like"/>
    <property type="match status" value="1"/>
</dbReference>
<dbReference type="FunFam" id="3.90.70.80:FF:000029">
    <property type="entry name" value="Uncharacterized protein, isoform A"/>
    <property type="match status" value="1"/>
</dbReference>
<dbReference type="Gene3D" id="3.90.70.80">
    <property type="match status" value="1"/>
</dbReference>
<dbReference type="InterPro" id="IPR003323">
    <property type="entry name" value="OTU_dom"/>
</dbReference>
<dbReference type="InterPro" id="IPR049769">
    <property type="entry name" value="OTU_OTU"/>
</dbReference>
<dbReference type="InterPro" id="IPR049770">
    <property type="entry name" value="OTU_Tudor"/>
</dbReference>
<dbReference type="InterPro" id="IPR038765">
    <property type="entry name" value="Papain-like_cys_pep_sf"/>
</dbReference>
<dbReference type="InterPro" id="IPR050704">
    <property type="entry name" value="Peptidase_C85-like"/>
</dbReference>
<dbReference type="InterPro" id="IPR002999">
    <property type="entry name" value="Tudor"/>
</dbReference>
<dbReference type="PANTHER" id="PTHR12419">
    <property type="entry name" value="OTU DOMAIN CONTAINING PROTEIN"/>
    <property type="match status" value="1"/>
</dbReference>
<dbReference type="PANTHER" id="PTHR12419:SF115">
    <property type="entry name" value="PROTEIN OVARIAN TUMOR LOCUS-RELATED"/>
    <property type="match status" value="1"/>
</dbReference>
<dbReference type="Pfam" id="PF02338">
    <property type="entry name" value="OTU"/>
    <property type="match status" value="1"/>
</dbReference>
<dbReference type="SMART" id="SM00333">
    <property type="entry name" value="TUDOR"/>
    <property type="match status" value="1"/>
</dbReference>
<dbReference type="SUPFAM" id="SSF54001">
    <property type="entry name" value="Cysteine proteinases"/>
    <property type="match status" value="1"/>
</dbReference>
<dbReference type="SUPFAM" id="SSF63748">
    <property type="entry name" value="Tudor/PWWP/MBT"/>
    <property type="match status" value="1"/>
</dbReference>
<dbReference type="PROSITE" id="PS50802">
    <property type="entry name" value="OTU"/>
    <property type="match status" value="1"/>
</dbReference>
<dbReference type="PROSITE" id="PS50304">
    <property type="entry name" value="TUDOR"/>
    <property type="match status" value="1"/>
</dbReference>
<comment type="function">
    <text evidence="6 7 8 9 10 12 13 14">Catalytic component of a deubiquitinase complex consisting of bam and otu (PubMed:26588485, PubMed:28484036). The complex deubiquitinates K63-linked polyubiquitinated proteins; this antagonizes the ubiquitination activity of Traf6 and regulates the IMD immune signaling pathway (PubMed:30879902). Otu-bam deubiquitinase activity is regulated by Traf6 dependent immune signaling regulation of bam expression levels; this forms a feedback loop that regulates the IMD immune signaling pathway and balances gut immune activity during aging (PubMed:30879902). The complex deubiquitinates and stabilizes CycA/cyclin-A to regulate CycA-dependent differentiation (PubMed:28484036). Involved in grk mRNA localization to the dorsal anterior region of the oocyte required for dorsal-ventral axis determination; may function as a ribonuclear protein complex together with sqd and Hrb27C (PubMed:15056611). May regulate actin cytoskeleton organization in differentiating cystocytes during fusome maturation; required for efficient nurse cell cytoplasmic dumping during oogenesis (PubMed:9344535). Essential for female fertility; involved in germ cell proliferation and germ cell differentiation (PubMed:1737618, PubMed:28484036, PubMed:7851643, PubMed:8436274).</text>
</comment>
<comment type="function">
    <molecule>Isoform B</molecule>
    <text evidence="6 7 12">Involved in the early stages of germ cell proliferation and differentiation during oogenesis (PubMed:7851643). Required for polytene chromosome dispersal in nurse cells during oogenesis (PubMed:15056611, PubMed:1737618).</text>
</comment>
<comment type="function">
    <molecule>Isoform A</molecule>
    <text evidence="12">Involved in the later stages of germ cell proliferation and differentiation during oogenesis.</text>
</comment>
<comment type="activity regulation">
    <text evidence="10">Activated by protein aggregation, which is mediated by the LC domain and enhanced by RNA binding.</text>
</comment>
<comment type="subunit">
    <text evidence="5 6 9 10">Self aggregates, forming amyloid-like fibrillar helical structures; protein aggregation is mediated by the C-terminal LC domain, is enhanced by RNA binding and is essential for deubiquitinase activity (PubMed:30879902). Interacts (via OTU domain) with bam (via C-terminus); the interaction enhances otu aggregation and deubiquitinase activity (PubMed:28484036, PubMed:30879902). Together with bam interacts with CycA/cyclin-A; the interaction stabilizes CycA by promoting its deubiquitination (PubMed:28484036). Together with bam interacts with Traf6 (PubMed:30879902). Interacts with Hrb27C; the interaction is RNA-independent (PubMed:15056611). Associates (via N-terminus) with mRNP complexes; the interaction is weak (PubMed:11287191).</text>
</comment>
<comment type="subcellular location">
    <subcellularLocation>
        <location evidence="5 7 10 12">Cytoplasm</location>
    </subcellularLocation>
    <subcellularLocation>
        <location evidence="12">Cytoplasm</location>
        <location evidence="12">Cell cortex</location>
    </subcellularLocation>
    <subcellularLocation>
        <location evidence="5">Cytoplasm</location>
        <location evidence="5">Perinuclear region</location>
    </subcellularLocation>
    <text evidence="5 10 12">There is contradictory evidence of what happens to otu localization in nurse cells during vitellogenesis; either it relocalizes to the region of the cell cortex in close apposition to surrounding follicle cells or it takes on a granular perinuclear localization pattern (or both occur and can only be visualized under certain experimental conditions) (PubMed:11287191, PubMed:7851643). Forms stable amyloid-like granules in the cytoplasm (PubMed:30879902).</text>
</comment>
<comment type="alternative products">
    <event type="alternative splicing"/>
    <isoform>
        <id>P10383-1</id>
        <name evidence="22">B</name>
        <name evidence="22">C</name>
        <name evidence="18">otu-104</name>
        <name evidence="16">104-kD</name>
        <sequence type="displayed"/>
    </isoform>
    <isoform>
        <id>P10383-2</id>
        <name evidence="22">A</name>
        <name evidence="22">D</name>
        <name evidence="22">E</name>
        <name evidence="18">otu-98</name>
        <name evidence="16">98-kD</name>
        <sequence type="described" ref="VSP_004354"/>
    </isoform>
    <text evidence="7 13">A number of isoforms are produced (PubMed:1737618, PubMed:8436274). These include a 98kDa isoform (A) and a 104kDa isoform (B) (PubMed:1737618). The smaller isoform lacks the Tudor domain and is the more abundant product in adult ovary extracts (PubMed:1737618).</text>
</comment>
<comment type="tissue specificity">
    <text evidence="10">Expressed at high levels in the ovary, at low levels in the brain and fat body, and at moderate levels in the gut.</text>
</comment>
<comment type="developmental stage">
    <text evidence="5 7 10 12">Expressed in both oocyte and nurse cells of the germarium during oogenesis, but not the surrounding somatic mesoderm (at protein level) (PubMed:1737618, PubMed:7851643). Throughout the previtellogenic stages of oogenesis expression is enriched in the oocyte, and nurse cell expression levels steadily increase (at protein level) (PubMed:11287191, PubMed:7851643). Nurse cell expression levels are maintained through vitellogenesis while oocyte expression levels are undetectable by stage 10 of oogenesis (at protein level) (PubMed:7851643). Expressed in the ovary throughout oogenesis, forming small aggregates in the germarium that increase in size and number up to stage nine egg chambers (at protein level) (PubMed:30879902).</text>
</comment>
<comment type="developmental stage">
    <molecule>Isoform B</molecule>
    <text evidence="12">Expressed in the ovaries of late pupae and young adults, dropping to undetectable levels in older mature adults (at protein level) (PubMed:7851643). Most abundant in egg chambers prior to germline cell differentiation (at protein level) (PubMed:7851643). Becomes enriched in the oocyte during oogenesis (at protein level) (PubMed:7851643).</text>
</comment>
<comment type="developmental stage">
    <molecule>Isoform A</molecule>
    <text evidence="12">Expressed in the ovaries of both young and mature adults but undetectable in the ovaries of late pupae (at protein level) (PubMed:7851643). Most abundant in differentiated egg chambers (at protein level) (PubMed:7851643). Does not become enriched in the oocyte during oogenesis (at protein level) (PubMed:7851643).</text>
</comment>
<comment type="induction">
    <text evidence="4">Expression is cooperatively activated by Ovo and Stil.</text>
</comment>
<comment type="domain">
    <text evidence="5">The N-terminal 423 amino acids, which includes the OTU deubiquitinase domain and the tudor domain, is essential for germ cell proliferation and early germ cell differentiation up to stage 10 of oogenesis.</text>
</comment>
<comment type="domain">
    <text evidence="5 10">Possesses a C-terminal low complexity (LC) domain that promotes protein coalescence, probably by forming amyloid-like aggregates (PubMed:30879902). Protein coalescence mediated by this domain is indispensable for deubiquitinase activity (PubMed:30879902). The C-terminal domain is required for oocyte maturation (PubMed:11287191).</text>
</comment>
<comment type="disruption phenotype">
    <text evidence="6 9 10 11 13 14">Female sterile (PubMed:8436274, PubMed:9344535). Chamberless ovarioles with little or no germ cell or cystoblast proliferation in the germarium (PubMed:8436274, PubMed:9344535). Some ovarioles become tumorous due to uncontrolled division of cystoblasts that fail to fully differentiate into nurse cells or oocytes (PubMed:28484036, PubMed:8436274, PubMed:9344535). Aberrant spectrosome to fusome conversion during cystocyte differentiation characterized by abnormal actin filament organization in stage 10 nurse cells (PubMed:9344535). Only a small number of eggs mature, and those that do have a dorsalized phenotype (PubMed:15056611). Conditional RNAi-mediated knockdown in germ cells results in tumorous germaria but does not reduce adult lifespan (PubMed:30879902). Gonads are atrophied and produce few egg chambers (PubMed:37027460). Conditional RNAi-mediated knockdown in intestinal cells reduces adult lifespan due to severe age-dependent dysfunction of the intestinal barrier (PubMed:30879902).</text>
</comment>
<comment type="caution">
    <text evidence="8 9 20">This protein is a putative deubiquitinase with homology to other OTU-type deubiquitinases (EC:3.4.19.12), although the nucleophile within the active site catalytic triad is a serine (Ser-40) instead of a cysteine. Initial characterization showed a lack of deubiquitinase activity towards all diubiquitin molecules and long K48- and K63- linked ubiquitin chains, even when the nucleophile was mutated back to a cysteine (PubMed:26588485). Subsequent characterization using a more sensitive assay did detect low level deubiquitinase activity (PubMed:28484036). Deubiquitinases that are serine proteases instead of cysteine- or metallo- proteases have to date not been described.</text>
</comment>
<comment type="sequence caution" evidence="19">
    <conflict type="frameshift">
        <sequence resource="EMBL-CDS" id="AAL49210"/>
    </conflict>
</comment>
<organism evidence="23">
    <name type="scientific">Drosophila melanogaster</name>
    <name type="common">Fruit fly</name>
    <dbReference type="NCBI Taxonomy" id="7227"/>
    <lineage>
        <taxon>Eukaryota</taxon>
        <taxon>Metazoa</taxon>
        <taxon>Ecdysozoa</taxon>
        <taxon>Arthropoda</taxon>
        <taxon>Hexapoda</taxon>
        <taxon>Insecta</taxon>
        <taxon>Pterygota</taxon>
        <taxon>Neoptera</taxon>
        <taxon>Endopterygota</taxon>
        <taxon>Diptera</taxon>
        <taxon>Brachycera</taxon>
        <taxon>Muscomorpha</taxon>
        <taxon>Ephydroidea</taxon>
        <taxon>Drosophilidae</taxon>
        <taxon>Drosophila</taxon>
        <taxon>Sophophora</taxon>
    </lineage>
</organism>
<accession>P10383</accession>
<accession>A4V451</accession>
<accession>Q8SYF4</accession>
<accession>Q9GYD8</accession>
<accession>Q9TWA9</accession>
<accession>Q9W3E4</accession>
<evidence type="ECO:0000255" key="1">
    <source>
        <dbReference type="PROSITE-ProRule" id="PRU00139"/>
    </source>
</evidence>
<evidence type="ECO:0000255" key="2">
    <source>
        <dbReference type="PROSITE-ProRule" id="PRU00211"/>
    </source>
</evidence>
<evidence type="ECO:0000256" key="3">
    <source>
        <dbReference type="SAM" id="MobiDB-lite"/>
    </source>
</evidence>
<evidence type="ECO:0000269" key="4">
    <source>
    </source>
</evidence>
<evidence type="ECO:0000269" key="5">
    <source>
    </source>
</evidence>
<evidence type="ECO:0000269" key="6">
    <source>
    </source>
</evidence>
<evidence type="ECO:0000269" key="7">
    <source>
    </source>
</evidence>
<evidence type="ECO:0000269" key="8">
    <source>
    </source>
</evidence>
<evidence type="ECO:0000269" key="9">
    <source>
    </source>
</evidence>
<evidence type="ECO:0000269" key="10">
    <source>
    </source>
</evidence>
<evidence type="ECO:0000269" key="11">
    <source>
    </source>
</evidence>
<evidence type="ECO:0000269" key="12">
    <source>
    </source>
</evidence>
<evidence type="ECO:0000269" key="13">
    <source>
    </source>
</evidence>
<evidence type="ECO:0000269" key="14">
    <source>
    </source>
</evidence>
<evidence type="ECO:0000303" key="15">
    <source>
    </source>
</evidence>
<evidence type="ECO:0000303" key="16">
    <source>
    </source>
</evidence>
<evidence type="ECO:0000303" key="17">
    <source>
    </source>
</evidence>
<evidence type="ECO:0000303" key="18">
    <source>
    </source>
</evidence>
<evidence type="ECO:0000305" key="19"/>
<evidence type="ECO:0000305" key="20">
    <source>
    </source>
</evidence>
<evidence type="ECO:0000305" key="21">
    <source>
    </source>
</evidence>
<evidence type="ECO:0000312" key="22">
    <source>
        <dbReference type="FlyBase" id="FBgn0003023"/>
    </source>
</evidence>
<evidence type="ECO:0000312" key="23">
    <source>
        <dbReference type="Proteomes" id="UP000000803"/>
    </source>
</evidence>
<sequence>MDMQVQRPITSGSRQAPDPYDQYLESRGLYRKHTARDASSLFRVIAEQMYDTQMLHYEIRLECVRFMTLKRRIFEKEIPGDFDSYMQDMSKPKTYGTMTELRAMSCLYRRNVILYEPYNMGTSVVFNRRYAENFRVFFNNENHFDSVYDVEYIERAAICQSIAFKLLYQKLFKLPDVSFAVEIMLHPHTFNWDRFNVEFDDKGYMVRIHCTDGRVFKLDLPGDTNCILENYKLCNFHSTNGNQSINARKGGRLEIKNQEERKASGSSGHEPNDLLPMCPNRLESCVRQLLDDGISPFPYKVAKSMDPYMYRNIEFDCWNDMRKEAKLYNVYINDYNFKVGAKCKVELPNETEMYTCHVQNISKDKNYCHVFVERIGKEIVVPYESLHPLPPDEYRPWSLPFRYHRQMPRLPLPKYAGKANKSSKWKKNKLFEMDQYFEHSKCDLMPYMPVDNCYQGVHIQDDEQRDHNDPEQNDQNPTTEQRDREEPQAQKQHQRTKASRVQPQNSSSSQNQEVSGSAAPPPTQYMNYVPMIPSRPGHLPPPWPASPMAIAEEFPFPISGTPHPPPTEGCVYMPFGGYGPPPPGAVALSGPHPFMPLPSPPLNVTGIGEPRRSLHPNGEDLPVDMVTLRYFYNMGVDLHWRMSHHTPPDELGMFGYHQQNNTDQQAGRTVVIGATEDNLTAVESTPPPSPEVANATEQSPLEKSAYAKRNLNSVKVRGKRPEQLQDIKDSLGPAAFLPTPTPSPSSNGSQFSFYTTPSPHHHLITPPRLLQPPPPPPIFYHKAGPPQLGGAAQGQTPYAWGMPAPVVSPYEVINNYNMDPSAQPQQQQPATLQPAPLSVQSQPAAVYAATRHH</sequence>
<feature type="chain" id="PRO_0000058104" description="Deubiquitinase otu">
    <location>
        <begin position="1"/>
        <end position="853"/>
    </location>
</feature>
<feature type="domain" description="OTU" evidence="1">
    <location>
        <begin position="29"/>
        <end position="150"/>
    </location>
</feature>
<feature type="domain" description="Tudor" evidence="2">
    <location>
        <begin position="336"/>
        <end position="396"/>
    </location>
</feature>
<feature type="region of interest" description="Disordered" evidence="3">
    <location>
        <begin position="1"/>
        <end position="20"/>
    </location>
</feature>
<feature type="region of interest" description="LC domain" evidence="21">
    <location>
        <begin position="396"/>
        <end position="853"/>
    </location>
</feature>
<feature type="region of interest" description="Disordered" evidence="3">
    <location>
        <begin position="460"/>
        <end position="531"/>
    </location>
</feature>
<feature type="region of interest" description="Disordered" evidence="3">
    <location>
        <begin position="681"/>
        <end position="704"/>
    </location>
</feature>
<feature type="region of interest" description="Disordered" evidence="3">
    <location>
        <begin position="732"/>
        <end position="794"/>
    </location>
</feature>
<feature type="region of interest" description="Disordered" evidence="3">
    <location>
        <begin position="817"/>
        <end position="853"/>
    </location>
</feature>
<feature type="compositionally biased region" description="Basic and acidic residues" evidence="3">
    <location>
        <begin position="460"/>
        <end position="470"/>
    </location>
</feature>
<feature type="compositionally biased region" description="Low complexity" evidence="3">
    <location>
        <begin position="499"/>
        <end position="517"/>
    </location>
</feature>
<feature type="compositionally biased region" description="Polar residues" evidence="3">
    <location>
        <begin position="747"/>
        <end position="758"/>
    </location>
</feature>
<feature type="compositionally biased region" description="Pro residues" evidence="3">
    <location>
        <begin position="769"/>
        <end position="778"/>
    </location>
</feature>
<feature type="compositionally biased region" description="Low complexity" evidence="3">
    <location>
        <begin position="783"/>
        <end position="794"/>
    </location>
</feature>
<feature type="compositionally biased region" description="Low complexity" evidence="3">
    <location>
        <begin position="820"/>
        <end position="838"/>
    </location>
</feature>
<feature type="active site" evidence="10">
    <location>
        <position position="37"/>
    </location>
</feature>
<feature type="active site" description="Nucleophile" evidence="10">
    <location>
        <position position="40"/>
    </location>
</feature>
<feature type="active site" evidence="10">
    <location>
        <position position="143"/>
    </location>
</feature>
<feature type="splice variant" id="VSP_004354" description="In isoform A." evidence="15 17">
    <location>
        <begin position="340"/>
        <end position="381"/>
    </location>
</feature>
<feature type="mutagenesis site" description="Loss of deubiquitinase activity." evidence="10">
    <original>D</original>
    <variation>A</variation>
    <location>
        <position position="37"/>
    </location>
</feature>
<feature type="mutagenesis site" description="Loss of deubiquitinase activity." evidence="10">
    <original>S</original>
    <variation>A</variation>
    <location>
        <position position="40"/>
    </location>
</feature>
<feature type="mutagenesis site" description="Loss of deubiquitinase activity." evidence="8 10">
    <original>S</original>
    <variation>C</variation>
    <location>
        <position position="40"/>
    </location>
</feature>
<feature type="mutagenesis site" description="Loss of deubiquitinase activity." evidence="10">
    <original>H</original>
    <variation>A</variation>
    <location>
        <position position="143"/>
    </location>
</feature>
<feature type="mutagenesis site" description="Unable to rescue fertility in mutant female flies. Does not rescue germ cell proliferation and differentiation phenotypes of mutant flies. Is not enriched in the oocyte." evidence="5">
    <location>
        <begin position="250"/>
        <end position="853"/>
    </location>
</feature>
<feature type="mutagenesis site" description="Unable to rescue fertility in mutant female flies. Does not rescue germ cell proliferation and differentiation phenotypes of mutant flies. Is not enriched in the oocyte." evidence="5">
    <location>
        <begin position="338"/>
        <end position="853"/>
    </location>
</feature>
<feature type="mutagenesis site" description="Fails to accumulate in the oocyte during oogenesis." evidence="12">
    <original>C</original>
    <variation>Y</variation>
    <location>
        <position position="343"/>
    </location>
</feature>
<feature type="mutagenesis site" description="Unable to rescue fertility in mutant female flies. Does not rescue germ cell proliferation and differentiation phenotypes of mutant flies." evidence="5">
    <location>
        <begin position="380"/>
        <end position="853"/>
    </location>
</feature>
<feature type="mutagenesis site" description="Unable to rescue fertility in mutant female flies. Partially rescues germ cell proliferation and differentiation phenotype in mutant flies." evidence="5">
    <location>
        <begin position="423"/>
        <end position="853"/>
    </location>
</feature>
<feature type="mutagenesis site" description="Reduces protein aggregation and deubiquitinase activity." evidence="10">
    <original>C</original>
    <variation>S</variation>
    <location>
        <position position="442"/>
    </location>
</feature>
<feature type="mutagenesis site" description="Reduces protein aggregation and deubiquitinase activity." evidence="10">
    <original>C</original>
    <variation>S</variation>
    <location>
        <position position="453"/>
    </location>
</feature>
<feature type="mutagenesis site" description="Reduces protein aggregation and deubiquitinase activity." evidence="10">
    <original>C</original>
    <variation>S</variation>
    <location>
        <position position="570"/>
    </location>
</feature>
<feature type="mutagenesis site" description="Unable to rescue fertility in mutant female flies. Partially rescues germ cell proliferation and differentiation phenotype in mutant flies." evidence="5">
    <location>
        <begin position="627"/>
        <end position="853"/>
    </location>
</feature>
<feature type="sequence conflict" description="In Ref. 1; CAA31983." evidence="19" ref="1">
    <original>K</original>
    <variation>Q</variation>
    <location>
        <position position="300"/>
    </location>
</feature>
<feature type="sequence conflict" description="In Ref. 3; AAA28740/AAF97987." evidence="19" ref="3">
    <original>T</original>
    <variation>P</variation>
    <location>
        <position position="831"/>
    </location>
</feature>
<gene>
    <name evidence="22" type="primary">otu</name>
    <name evidence="22" type="ORF">CG12743</name>
</gene>